<name>EFG_LEGPC</name>
<evidence type="ECO:0000255" key="1">
    <source>
        <dbReference type="HAMAP-Rule" id="MF_00054"/>
    </source>
</evidence>
<keyword id="KW-0963">Cytoplasm</keyword>
<keyword id="KW-0251">Elongation factor</keyword>
<keyword id="KW-0342">GTP-binding</keyword>
<keyword id="KW-0547">Nucleotide-binding</keyword>
<keyword id="KW-0648">Protein biosynthesis</keyword>
<proteinExistence type="inferred from homology"/>
<sequence>MATPLKLYRNIGIAAHVDAGKTTTTERVLYYTGMSHKIGEVHDGAATMDWMVQEQERGITITSAATTCYWSGMDKQFESHRINIIDTPGHVDFMIEVERSLRVLDGAVVVFDSVAGVEPQSETVWRQANKYGVPRIVFVNKMDRMGANFLRVVSQIKQRLGSTPVVLQLPIGAEEEFKGVIDLIKMKAIHWDEENKGMTFKYVDIPADLKATCEEYRAHIIEAAAEYSEELMEKYLEGEEFTEAEIKKALRHLTITNKVVPVFCGSAFKNKGVQAVLDGVIEYLPSPTDIPDIQGVDEHGDEIHRKTSYDEPFSALAFKIATDPFVGTLTYFRAYSGILKSGDTVYNSVKGKKERIGRLLQMHANSREEIKEVRAGDIAAAVGLKTVTTGDTLCDQDKVVILERMDFPDPVIAVAVEPKTKADQEKMGIALGKLAQEDPSFRVHTDEESGQTIIQGMGELHLEIIVDRMKREFNVEANVGKPQVAYRETLKQAVEQEGKFVRQSGGRGQYGHVWLKIEPQEPGKGYEFINAIVGGVIPKEYIPAVDKGIQEQMQNGVIAGYPVVDVKVTLFDGSFHEVDSSEMALKIAGSQCFKQGALKAKPVLLEPIMSVEVVTPEDYMGDVMGDLNRRRGLVQGMEDSPAGKIVRAEVPLAEMFGYSTDLRSATQGRATYTMEFCKYAEAPTNIAEAIIKKQ</sequence>
<comment type="function">
    <text evidence="1">Catalyzes the GTP-dependent ribosomal translocation step during translation elongation. During this step, the ribosome changes from the pre-translocational (PRE) to the post-translocational (POST) state as the newly formed A-site-bound peptidyl-tRNA and P-site-bound deacylated tRNA move to the P and E sites, respectively. Catalyzes the coordinated movement of the two tRNA molecules, the mRNA and conformational changes in the ribosome.</text>
</comment>
<comment type="subcellular location">
    <subcellularLocation>
        <location evidence="1">Cytoplasm</location>
    </subcellularLocation>
</comment>
<comment type="similarity">
    <text evidence="1">Belongs to the TRAFAC class translation factor GTPase superfamily. Classic translation factor GTPase family. EF-G/EF-2 subfamily.</text>
</comment>
<organism>
    <name type="scientific">Legionella pneumophila (strain Corby)</name>
    <dbReference type="NCBI Taxonomy" id="400673"/>
    <lineage>
        <taxon>Bacteria</taxon>
        <taxon>Pseudomonadati</taxon>
        <taxon>Pseudomonadota</taxon>
        <taxon>Gammaproteobacteria</taxon>
        <taxon>Legionellales</taxon>
        <taxon>Legionellaceae</taxon>
        <taxon>Legionella</taxon>
    </lineage>
</organism>
<gene>
    <name evidence="1" type="primary">fusA</name>
    <name type="ordered locus">LPC_3017</name>
</gene>
<reference key="1">
    <citation type="submission" date="2006-11" db="EMBL/GenBank/DDBJ databases">
        <title>Identification and characterization of a new conjugation/ type IVA secretion system (trb/tra) of L. pneumophila Corby localized on a mobile genomic island.</title>
        <authorList>
            <person name="Gloeckner G."/>
            <person name="Albert-Weissenberger C."/>
            <person name="Weinmann E."/>
            <person name="Jacobi S."/>
            <person name="Schunder E."/>
            <person name="Steinert M."/>
            <person name="Buchrieser C."/>
            <person name="Hacker J."/>
            <person name="Heuner K."/>
        </authorList>
    </citation>
    <scope>NUCLEOTIDE SEQUENCE [LARGE SCALE GENOMIC DNA]</scope>
    <source>
        <strain>Corby</strain>
    </source>
</reference>
<protein>
    <recommendedName>
        <fullName evidence="1">Elongation factor G</fullName>
        <shortName evidence="1">EF-G</shortName>
    </recommendedName>
</protein>
<accession>A5IHR7</accession>
<dbReference type="EMBL" id="CP000675">
    <property type="protein sequence ID" value="ABQ56917.1"/>
    <property type="molecule type" value="Genomic_DNA"/>
</dbReference>
<dbReference type="RefSeq" id="WP_011945545.1">
    <property type="nucleotide sequence ID" value="NC_009494.2"/>
</dbReference>
<dbReference type="SMR" id="A5IHR7"/>
<dbReference type="KEGG" id="lpc:LPC_3017"/>
<dbReference type="HOGENOM" id="CLU_002794_4_1_6"/>
<dbReference type="GO" id="GO:0005737">
    <property type="term" value="C:cytoplasm"/>
    <property type="evidence" value="ECO:0007669"/>
    <property type="project" value="UniProtKB-SubCell"/>
</dbReference>
<dbReference type="GO" id="GO:0005525">
    <property type="term" value="F:GTP binding"/>
    <property type="evidence" value="ECO:0007669"/>
    <property type="project" value="UniProtKB-UniRule"/>
</dbReference>
<dbReference type="GO" id="GO:0003924">
    <property type="term" value="F:GTPase activity"/>
    <property type="evidence" value="ECO:0007669"/>
    <property type="project" value="InterPro"/>
</dbReference>
<dbReference type="GO" id="GO:0097216">
    <property type="term" value="F:guanosine tetraphosphate binding"/>
    <property type="evidence" value="ECO:0007669"/>
    <property type="project" value="UniProtKB-ARBA"/>
</dbReference>
<dbReference type="GO" id="GO:0003746">
    <property type="term" value="F:translation elongation factor activity"/>
    <property type="evidence" value="ECO:0007669"/>
    <property type="project" value="UniProtKB-UniRule"/>
</dbReference>
<dbReference type="GO" id="GO:0032790">
    <property type="term" value="P:ribosome disassembly"/>
    <property type="evidence" value="ECO:0007669"/>
    <property type="project" value="TreeGrafter"/>
</dbReference>
<dbReference type="CDD" id="cd01886">
    <property type="entry name" value="EF-G"/>
    <property type="match status" value="1"/>
</dbReference>
<dbReference type="CDD" id="cd16262">
    <property type="entry name" value="EFG_III"/>
    <property type="match status" value="1"/>
</dbReference>
<dbReference type="CDD" id="cd01434">
    <property type="entry name" value="EFG_mtEFG1_IV"/>
    <property type="match status" value="1"/>
</dbReference>
<dbReference type="CDD" id="cd03713">
    <property type="entry name" value="EFG_mtEFG_C"/>
    <property type="match status" value="1"/>
</dbReference>
<dbReference type="CDD" id="cd04088">
    <property type="entry name" value="EFG_mtEFG_II"/>
    <property type="match status" value="1"/>
</dbReference>
<dbReference type="FunFam" id="2.40.30.10:FF:000006">
    <property type="entry name" value="Elongation factor G"/>
    <property type="match status" value="1"/>
</dbReference>
<dbReference type="FunFam" id="3.30.230.10:FF:000003">
    <property type="entry name" value="Elongation factor G"/>
    <property type="match status" value="1"/>
</dbReference>
<dbReference type="FunFam" id="3.30.70.240:FF:000001">
    <property type="entry name" value="Elongation factor G"/>
    <property type="match status" value="1"/>
</dbReference>
<dbReference type="FunFam" id="3.30.70.870:FF:000001">
    <property type="entry name" value="Elongation factor G"/>
    <property type="match status" value="1"/>
</dbReference>
<dbReference type="FunFam" id="3.40.50.300:FF:000029">
    <property type="entry name" value="Elongation factor G"/>
    <property type="match status" value="1"/>
</dbReference>
<dbReference type="Gene3D" id="3.30.230.10">
    <property type="match status" value="1"/>
</dbReference>
<dbReference type="Gene3D" id="3.30.70.240">
    <property type="match status" value="1"/>
</dbReference>
<dbReference type="Gene3D" id="3.30.70.870">
    <property type="entry name" value="Elongation Factor G (Translational Gtpase), domain 3"/>
    <property type="match status" value="1"/>
</dbReference>
<dbReference type="Gene3D" id="3.40.50.300">
    <property type="entry name" value="P-loop containing nucleotide triphosphate hydrolases"/>
    <property type="match status" value="1"/>
</dbReference>
<dbReference type="Gene3D" id="2.40.30.10">
    <property type="entry name" value="Translation factors"/>
    <property type="match status" value="1"/>
</dbReference>
<dbReference type="HAMAP" id="MF_00054_B">
    <property type="entry name" value="EF_G_EF_2_B"/>
    <property type="match status" value="1"/>
</dbReference>
<dbReference type="InterPro" id="IPR041095">
    <property type="entry name" value="EFG_II"/>
</dbReference>
<dbReference type="InterPro" id="IPR009022">
    <property type="entry name" value="EFG_III"/>
</dbReference>
<dbReference type="InterPro" id="IPR035647">
    <property type="entry name" value="EFG_III/V"/>
</dbReference>
<dbReference type="InterPro" id="IPR047872">
    <property type="entry name" value="EFG_IV"/>
</dbReference>
<dbReference type="InterPro" id="IPR035649">
    <property type="entry name" value="EFG_V"/>
</dbReference>
<dbReference type="InterPro" id="IPR000640">
    <property type="entry name" value="EFG_V-like"/>
</dbReference>
<dbReference type="InterPro" id="IPR004161">
    <property type="entry name" value="EFTu-like_2"/>
</dbReference>
<dbReference type="InterPro" id="IPR031157">
    <property type="entry name" value="G_TR_CS"/>
</dbReference>
<dbReference type="InterPro" id="IPR027417">
    <property type="entry name" value="P-loop_NTPase"/>
</dbReference>
<dbReference type="InterPro" id="IPR020568">
    <property type="entry name" value="Ribosomal_Su5_D2-typ_SF"/>
</dbReference>
<dbReference type="InterPro" id="IPR014721">
    <property type="entry name" value="Ribsml_uS5_D2-typ_fold_subgr"/>
</dbReference>
<dbReference type="InterPro" id="IPR005225">
    <property type="entry name" value="Small_GTP-bd"/>
</dbReference>
<dbReference type="InterPro" id="IPR000795">
    <property type="entry name" value="T_Tr_GTP-bd_dom"/>
</dbReference>
<dbReference type="InterPro" id="IPR009000">
    <property type="entry name" value="Transl_B-barrel_sf"/>
</dbReference>
<dbReference type="InterPro" id="IPR004540">
    <property type="entry name" value="Transl_elong_EFG/EF2"/>
</dbReference>
<dbReference type="InterPro" id="IPR005517">
    <property type="entry name" value="Transl_elong_EFG/EF2_IV"/>
</dbReference>
<dbReference type="NCBIfam" id="TIGR00484">
    <property type="entry name" value="EF-G"/>
    <property type="match status" value="1"/>
</dbReference>
<dbReference type="NCBIfam" id="NF009379">
    <property type="entry name" value="PRK12740.1-3"/>
    <property type="match status" value="1"/>
</dbReference>
<dbReference type="NCBIfam" id="NF009381">
    <property type="entry name" value="PRK12740.1-5"/>
    <property type="match status" value="1"/>
</dbReference>
<dbReference type="NCBIfam" id="TIGR00231">
    <property type="entry name" value="small_GTP"/>
    <property type="match status" value="1"/>
</dbReference>
<dbReference type="PANTHER" id="PTHR43261:SF1">
    <property type="entry name" value="RIBOSOME-RELEASING FACTOR 2, MITOCHONDRIAL"/>
    <property type="match status" value="1"/>
</dbReference>
<dbReference type="PANTHER" id="PTHR43261">
    <property type="entry name" value="TRANSLATION ELONGATION FACTOR G-RELATED"/>
    <property type="match status" value="1"/>
</dbReference>
<dbReference type="Pfam" id="PF00679">
    <property type="entry name" value="EFG_C"/>
    <property type="match status" value="1"/>
</dbReference>
<dbReference type="Pfam" id="PF14492">
    <property type="entry name" value="EFG_III"/>
    <property type="match status" value="1"/>
</dbReference>
<dbReference type="Pfam" id="PF03764">
    <property type="entry name" value="EFG_IV"/>
    <property type="match status" value="1"/>
</dbReference>
<dbReference type="Pfam" id="PF00009">
    <property type="entry name" value="GTP_EFTU"/>
    <property type="match status" value="1"/>
</dbReference>
<dbReference type="Pfam" id="PF03144">
    <property type="entry name" value="GTP_EFTU_D2"/>
    <property type="match status" value="1"/>
</dbReference>
<dbReference type="PRINTS" id="PR00315">
    <property type="entry name" value="ELONGATNFCT"/>
</dbReference>
<dbReference type="SMART" id="SM00838">
    <property type="entry name" value="EFG_C"/>
    <property type="match status" value="1"/>
</dbReference>
<dbReference type="SMART" id="SM00889">
    <property type="entry name" value="EFG_IV"/>
    <property type="match status" value="1"/>
</dbReference>
<dbReference type="SUPFAM" id="SSF54980">
    <property type="entry name" value="EF-G C-terminal domain-like"/>
    <property type="match status" value="2"/>
</dbReference>
<dbReference type="SUPFAM" id="SSF52540">
    <property type="entry name" value="P-loop containing nucleoside triphosphate hydrolases"/>
    <property type="match status" value="1"/>
</dbReference>
<dbReference type="SUPFAM" id="SSF54211">
    <property type="entry name" value="Ribosomal protein S5 domain 2-like"/>
    <property type="match status" value="1"/>
</dbReference>
<dbReference type="SUPFAM" id="SSF50447">
    <property type="entry name" value="Translation proteins"/>
    <property type="match status" value="1"/>
</dbReference>
<dbReference type="PROSITE" id="PS00301">
    <property type="entry name" value="G_TR_1"/>
    <property type="match status" value="1"/>
</dbReference>
<dbReference type="PROSITE" id="PS51722">
    <property type="entry name" value="G_TR_2"/>
    <property type="match status" value="1"/>
</dbReference>
<feature type="chain" id="PRO_1000008840" description="Elongation factor G">
    <location>
        <begin position="1"/>
        <end position="694"/>
    </location>
</feature>
<feature type="domain" description="tr-type G">
    <location>
        <begin position="6"/>
        <end position="288"/>
    </location>
</feature>
<feature type="binding site" evidence="1">
    <location>
        <begin position="15"/>
        <end position="22"/>
    </location>
    <ligand>
        <name>GTP</name>
        <dbReference type="ChEBI" id="CHEBI:37565"/>
    </ligand>
</feature>
<feature type="binding site" evidence="1">
    <location>
        <begin position="86"/>
        <end position="90"/>
    </location>
    <ligand>
        <name>GTP</name>
        <dbReference type="ChEBI" id="CHEBI:37565"/>
    </ligand>
</feature>
<feature type="binding site" evidence="1">
    <location>
        <begin position="140"/>
        <end position="143"/>
    </location>
    <ligand>
        <name>GTP</name>
        <dbReference type="ChEBI" id="CHEBI:37565"/>
    </ligand>
</feature>